<organism>
    <name type="scientific">Macaca fascicularis</name>
    <name type="common">Crab-eating macaque</name>
    <name type="synonym">Cynomolgus monkey</name>
    <dbReference type="NCBI Taxonomy" id="9541"/>
    <lineage>
        <taxon>Eukaryota</taxon>
        <taxon>Metazoa</taxon>
        <taxon>Chordata</taxon>
        <taxon>Craniata</taxon>
        <taxon>Vertebrata</taxon>
        <taxon>Euteleostomi</taxon>
        <taxon>Mammalia</taxon>
        <taxon>Eutheria</taxon>
        <taxon>Euarchontoglires</taxon>
        <taxon>Primates</taxon>
        <taxon>Haplorrhini</taxon>
        <taxon>Catarrhini</taxon>
        <taxon>Cercopithecidae</taxon>
        <taxon>Cercopithecinae</taxon>
        <taxon>Macaca</taxon>
    </lineage>
</organism>
<evidence type="ECO:0000250" key="1"/>
<evidence type="ECO:0000250" key="2">
    <source>
        <dbReference type="UniProtKB" id="Q9JHG2"/>
    </source>
</evidence>
<evidence type="ECO:0000256" key="3">
    <source>
        <dbReference type="SAM" id="MobiDB-lite"/>
    </source>
</evidence>
<evidence type="ECO:0000305" key="4"/>
<feature type="chain" id="PRO_0000295270" description="Calcipressin-2">
    <location>
        <begin position="1"/>
        <end position="197"/>
    </location>
</feature>
<feature type="region of interest" description="Disordered" evidence="3">
    <location>
        <begin position="166"/>
        <end position="197"/>
    </location>
</feature>
<feature type="modified residue" description="Phosphoserine" evidence="2">
    <location>
        <position position="167"/>
    </location>
</feature>
<accession>Q4R4P5</accession>
<name>RCAN2_MACFA</name>
<comment type="function">
    <text evidence="1">Inhibits calcineurin-dependent transcriptional responses by binding to the catalytic domain of calcineurin A. Could play a role during central nervous system development (By similarity).</text>
</comment>
<comment type="similarity">
    <text evidence="4">Belongs to the RCAN family.</text>
</comment>
<reference key="1">
    <citation type="submission" date="2005-06" db="EMBL/GenBank/DDBJ databases">
        <title>DNA sequences of macaque genes expressed in brain or testis and its evolutionary implications.</title>
        <authorList>
            <consortium name="International consortium for macaque cDNA sequencing and analysis"/>
        </authorList>
    </citation>
    <scope>NUCLEOTIDE SEQUENCE [LARGE SCALE MRNA]</scope>
    <source>
        <tissue>Temporal cortex</tissue>
    </source>
</reference>
<gene>
    <name type="primary">RCAN2</name>
    <name type="synonym">DSCR1L1</name>
    <name type="ORF">QtrA-12717</name>
</gene>
<dbReference type="EMBL" id="AB169849">
    <property type="protein sequence ID" value="BAE01930.1"/>
    <property type="molecule type" value="mRNA"/>
</dbReference>
<dbReference type="SMR" id="Q4R4P5"/>
<dbReference type="STRING" id="9541.ENSMFAP00000035277"/>
<dbReference type="eggNOG" id="KOG4019">
    <property type="taxonomic scope" value="Eukaryota"/>
</dbReference>
<dbReference type="Proteomes" id="UP000233100">
    <property type="component" value="Unplaced"/>
</dbReference>
<dbReference type="GO" id="GO:0005737">
    <property type="term" value="C:cytoplasm"/>
    <property type="evidence" value="ECO:0007669"/>
    <property type="project" value="TreeGrafter"/>
</dbReference>
<dbReference type="GO" id="GO:0005634">
    <property type="term" value="C:nucleus"/>
    <property type="evidence" value="ECO:0007669"/>
    <property type="project" value="TreeGrafter"/>
</dbReference>
<dbReference type="GO" id="GO:0008597">
    <property type="term" value="F:calcium-dependent protein serine/threonine phosphatase regulator activity"/>
    <property type="evidence" value="ECO:0007669"/>
    <property type="project" value="TreeGrafter"/>
</dbReference>
<dbReference type="GO" id="GO:0003676">
    <property type="term" value="F:nucleic acid binding"/>
    <property type="evidence" value="ECO:0007669"/>
    <property type="project" value="InterPro"/>
</dbReference>
<dbReference type="GO" id="GO:0019722">
    <property type="term" value="P:calcium-mediated signaling"/>
    <property type="evidence" value="ECO:0007669"/>
    <property type="project" value="InterPro"/>
</dbReference>
<dbReference type="CDD" id="cd12709">
    <property type="entry name" value="RRM_RCAN2"/>
    <property type="match status" value="1"/>
</dbReference>
<dbReference type="FunFam" id="3.30.70.330:FF:000092">
    <property type="entry name" value="Calcipressin-2 isoform 2"/>
    <property type="match status" value="1"/>
</dbReference>
<dbReference type="Gene3D" id="3.30.70.330">
    <property type="match status" value="1"/>
</dbReference>
<dbReference type="InterPro" id="IPR006931">
    <property type="entry name" value="Calcipressin"/>
</dbReference>
<dbReference type="InterPro" id="IPR012677">
    <property type="entry name" value="Nucleotide-bd_a/b_plait_sf"/>
</dbReference>
<dbReference type="InterPro" id="IPR035979">
    <property type="entry name" value="RBD_domain_sf"/>
</dbReference>
<dbReference type="InterPro" id="IPR034919">
    <property type="entry name" value="RCAN2_RRM"/>
</dbReference>
<dbReference type="PANTHER" id="PTHR10300">
    <property type="entry name" value="CALCIPRESSIN"/>
    <property type="match status" value="1"/>
</dbReference>
<dbReference type="PANTHER" id="PTHR10300:SF5">
    <property type="entry name" value="CALCIPRESSIN-2"/>
    <property type="match status" value="1"/>
</dbReference>
<dbReference type="Pfam" id="PF04847">
    <property type="entry name" value="Calcipressin"/>
    <property type="match status" value="1"/>
</dbReference>
<dbReference type="SUPFAM" id="SSF54928">
    <property type="entry name" value="RNA-binding domain, RBD"/>
    <property type="match status" value="1"/>
</dbReference>
<proteinExistence type="evidence at transcript level"/>
<keyword id="KW-0597">Phosphoprotein</keyword>
<keyword id="KW-1185">Reference proteome</keyword>
<sequence length="197" mass="22096">MPAPSMDCDVSTLVACVVDVEVFTNQEVKEKFEGLFRTYDDCVTFQLFKSFRRVRINFSNPKSAARARIELHETQFRGKKLKLYFAQVQTPETDGDKLHLAPPQPAKQFLISPPSSPPVGWQPINDATPVLNYDLLYAVAKLRPGEKYELHAGTESTPSVVVHVCDSDIEEEEDPKTSPKPKIIQTRRPGLPPSVSN</sequence>
<protein>
    <recommendedName>
        <fullName>Calcipressin-2</fullName>
    </recommendedName>
    <alternativeName>
        <fullName>Down syndrome candidate region 1-like protein 1</fullName>
    </alternativeName>
    <alternativeName>
        <fullName>Regulator of calcineurin 2</fullName>
    </alternativeName>
</protein>